<feature type="signal peptide" evidence="4">
    <location>
        <begin position="1"/>
        <end position="17"/>
    </location>
</feature>
<feature type="chain" id="PRO_0000097247" description="Renin receptor">
    <location>
        <begin position="18"/>
        <end position="351"/>
    </location>
</feature>
<feature type="chain" id="PRO_0000447862" description="Renin receptor extracellular fragment" evidence="6">
    <location>
        <begin position="18"/>
        <end position="276"/>
    </location>
</feature>
<feature type="chain" id="PRO_0000447863" description="Renin receptor cytoplasmic fragment" evidence="6">
    <location>
        <begin position="279"/>
        <end position="351"/>
    </location>
</feature>
<feature type="topological domain" description="Extracellular" evidence="4">
    <location>
        <begin position="18"/>
        <end position="303"/>
    </location>
</feature>
<feature type="transmembrane region" description="Helical" evidence="4">
    <location>
        <begin position="304"/>
        <end position="324"/>
    </location>
</feature>
<feature type="topological domain" description="Cytoplasmic" evidence="4">
    <location>
        <begin position="325"/>
        <end position="351"/>
    </location>
</feature>
<feature type="short sequence motif" description="Mediates retrograde transport to the ER" evidence="1">
    <location>
        <begin position="347"/>
        <end position="351"/>
    </location>
</feature>
<feature type="site" description="Cleavage; by furin-like protease" evidence="1">
    <location>
        <begin position="276"/>
        <end position="277"/>
    </location>
</feature>
<feature type="site" description="Cleavage; by furin-like protease" evidence="1">
    <location>
        <begin position="278"/>
        <end position="279"/>
    </location>
</feature>
<feature type="helix" evidence="9">
    <location>
        <begin position="304"/>
        <end position="330"/>
    </location>
</feature>
<organism>
    <name type="scientific">Bos taurus</name>
    <name type="common">Bovine</name>
    <dbReference type="NCBI Taxonomy" id="9913"/>
    <lineage>
        <taxon>Eukaryota</taxon>
        <taxon>Metazoa</taxon>
        <taxon>Chordata</taxon>
        <taxon>Craniata</taxon>
        <taxon>Vertebrata</taxon>
        <taxon>Euteleostomi</taxon>
        <taxon>Mammalia</taxon>
        <taxon>Eutheria</taxon>
        <taxon>Laurasiatheria</taxon>
        <taxon>Artiodactyla</taxon>
        <taxon>Ruminantia</taxon>
        <taxon>Pecora</taxon>
        <taxon>Bovidae</taxon>
        <taxon>Bovinae</taxon>
        <taxon>Bos</taxon>
    </lineage>
</organism>
<protein>
    <recommendedName>
        <fullName>Renin receptor</fullName>
    </recommendedName>
    <alternativeName>
        <fullName>ATPase H(+)-transporting lysosomal accessory protein 2</fullName>
    </alternativeName>
    <alternativeName>
        <fullName>ATPase H(+)-transporting lysosomal-interacting protein 2</fullName>
    </alternativeName>
    <alternativeName>
        <fullName>Renin/prorenin receptor</fullName>
    </alternativeName>
    <alternativeName>
        <fullName>Vacuolar ATP synthase membrane sector-associated protein M8-9</fullName>
        <shortName>V-ATPase M8.9 subunit</shortName>
    </alternativeName>
    <component>
        <recommendedName>
            <fullName evidence="6">Renin receptor extracellular fragment</fullName>
        </recommendedName>
    </component>
    <component>
        <recommendedName>
            <fullName evidence="6">Renin receptor cytoplasmic fragment</fullName>
        </recommendedName>
    </component>
</protein>
<dbReference type="EMBL" id="BC140624">
    <property type="protein sequence ID" value="AAI40625.1"/>
    <property type="molecule type" value="mRNA"/>
</dbReference>
<dbReference type="RefSeq" id="NP_001091491.1">
    <property type="nucleotide sequence ID" value="NM_001098022.1"/>
</dbReference>
<dbReference type="PDB" id="6XBW">
    <property type="method" value="EM"/>
    <property type="resolution" value="3.37 A"/>
    <property type="chains" value="r=1-351"/>
</dbReference>
<dbReference type="PDB" id="6XBY">
    <property type="method" value="EM"/>
    <property type="resolution" value="3.79 A"/>
    <property type="chains" value="r=1-351"/>
</dbReference>
<dbReference type="PDB" id="7KHR">
    <property type="method" value="EM"/>
    <property type="resolution" value="3.62 A"/>
    <property type="chains" value="r=1-351"/>
</dbReference>
<dbReference type="PDBsum" id="6XBW"/>
<dbReference type="PDBsum" id="6XBY"/>
<dbReference type="PDBsum" id="7KHR"/>
<dbReference type="EMDB" id="EMD-22121"/>
<dbReference type="EMDB" id="EMD-22122"/>
<dbReference type="EMDB" id="EMD-22880"/>
<dbReference type="SMR" id="P81134"/>
<dbReference type="CORUM" id="P81134"/>
<dbReference type="FunCoup" id="P81134">
    <property type="interactions" value="1838"/>
</dbReference>
<dbReference type="STRING" id="9913.ENSBTAP00000074424"/>
<dbReference type="PaxDb" id="9913-ENSBTAP00000023668"/>
<dbReference type="Ensembl" id="ENSBTAT00000023668.6">
    <property type="protein sequence ID" value="ENSBTAP00000023668.6"/>
    <property type="gene ID" value="ENSBTAG00000017801.7"/>
</dbReference>
<dbReference type="GeneID" id="513520"/>
<dbReference type="KEGG" id="bta:513520"/>
<dbReference type="CTD" id="10159"/>
<dbReference type="VEuPathDB" id="HostDB:ENSBTAG00000017801"/>
<dbReference type="eggNOG" id="KOG4737">
    <property type="taxonomic scope" value="Eukaryota"/>
</dbReference>
<dbReference type="GeneTree" id="ENSGT00390000008856"/>
<dbReference type="InParanoid" id="P81134"/>
<dbReference type="OrthoDB" id="7866065at2759"/>
<dbReference type="Reactome" id="R-BTA-2022377">
    <property type="pathway name" value="Metabolism of Angiotensinogen to Angiotensins"/>
</dbReference>
<dbReference type="Reactome" id="R-BTA-6798695">
    <property type="pathway name" value="Neutrophil degranulation"/>
</dbReference>
<dbReference type="Proteomes" id="UP000009136">
    <property type="component" value="Chromosome X"/>
</dbReference>
<dbReference type="Bgee" id="ENSBTAG00000017801">
    <property type="expression patterns" value="Expressed in spermatocyte and 102 other cell types or tissues"/>
</dbReference>
<dbReference type="GO" id="GO:0000421">
    <property type="term" value="C:autophagosome membrane"/>
    <property type="evidence" value="ECO:0007669"/>
    <property type="project" value="UniProtKB-SubCell"/>
</dbReference>
<dbReference type="GO" id="GO:0030424">
    <property type="term" value="C:axon"/>
    <property type="evidence" value="ECO:0007669"/>
    <property type="project" value="UniProtKB-SubCell"/>
</dbReference>
<dbReference type="GO" id="GO:0030665">
    <property type="term" value="C:clathrin-coated vesicle membrane"/>
    <property type="evidence" value="ECO:0007669"/>
    <property type="project" value="UniProtKB-SubCell"/>
</dbReference>
<dbReference type="GO" id="GO:0032591">
    <property type="term" value="C:dendritic spine membrane"/>
    <property type="evidence" value="ECO:0007669"/>
    <property type="project" value="UniProtKB-SubCell"/>
</dbReference>
<dbReference type="GO" id="GO:0005789">
    <property type="term" value="C:endoplasmic reticulum membrane"/>
    <property type="evidence" value="ECO:0007669"/>
    <property type="project" value="UniProtKB-SubCell"/>
</dbReference>
<dbReference type="GO" id="GO:0010008">
    <property type="term" value="C:endosome membrane"/>
    <property type="evidence" value="ECO:0007669"/>
    <property type="project" value="UniProtKB-SubCell"/>
</dbReference>
<dbReference type="GO" id="GO:0009897">
    <property type="term" value="C:external side of plasma membrane"/>
    <property type="evidence" value="ECO:0000318"/>
    <property type="project" value="GO_Central"/>
</dbReference>
<dbReference type="GO" id="GO:0005765">
    <property type="term" value="C:lysosomal membrane"/>
    <property type="evidence" value="ECO:0007669"/>
    <property type="project" value="UniProtKB-SubCell"/>
</dbReference>
<dbReference type="GO" id="GO:0045211">
    <property type="term" value="C:postsynaptic membrane"/>
    <property type="evidence" value="ECO:0007669"/>
    <property type="project" value="UniProtKB-KW"/>
</dbReference>
<dbReference type="GO" id="GO:0030672">
    <property type="term" value="C:synaptic vesicle membrane"/>
    <property type="evidence" value="ECO:0007669"/>
    <property type="project" value="UniProtKB-SubCell"/>
</dbReference>
<dbReference type="GO" id="GO:0000220">
    <property type="term" value="C:vacuolar proton-transporting V-type ATPase, V0 domain"/>
    <property type="evidence" value="ECO:0000314"/>
    <property type="project" value="UniProtKB"/>
</dbReference>
<dbReference type="GO" id="GO:0038023">
    <property type="term" value="F:signaling receptor activity"/>
    <property type="evidence" value="ECO:0007669"/>
    <property type="project" value="InterPro"/>
</dbReference>
<dbReference type="GO" id="GO:0007042">
    <property type="term" value="P:lysosomal lumen acidification"/>
    <property type="evidence" value="ECO:0000250"/>
    <property type="project" value="UniProtKB"/>
</dbReference>
<dbReference type="GO" id="GO:0045851">
    <property type="term" value="P:pH reduction"/>
    <property type="evidence" value="ECO:0000305"/>
    <property type="project" value="UniProtKB"/>
</dbReference>
<dbReference type="GO" id="GO:0090263">
    <property type="term" value="P:positive regulation of canonical Wnt signaling pathway"/>
    <property type="evidence" value="ECO:0000250"/>
    <property type="project" value="UniProtKB"/>
</dbReference>
<dbReference type="GO" id="GO:0030177">
    <property type="term" value="P:positive regulation of Wnt signaling pathway"/>
    <property type="evidence" value="ECO:0000318"/>
    <property type="project" value="GO_Central"/>
</dbReference>
<dbReference type="GO" id="GO:1902600">
    <property type="term" value="P:proton transmembrane transport"/>
    <property type="evidence" value="ECO:0000305"/>
    <property type="project" value="UniProtKB"/>
</dbReference>
<dbReference type="InterPro" id="IPR056780">
    <property type="entry name" value="Renin_r_C"/>
</dbReference>
<dbReference type="InterPro" id="IPR012493">
    <property type="entry name" value="Renin_rcpt"/>
</dbReference>
<dbReference type="PANTHER" id="PTHR13351">
    <property type="entry name" value="RENIN RECEPTOR"/>
    <property type="match status" value="1"/>
</dbReference>
<dbReference type="PANTHER" id="PTHR13351:SF1">
    <property type="entry name" value="RENIN RECEPTOR"/>
    <property type="match status" value="1"/>
</dbReference>
<dbReference type="Pfam" id="PF07850">
    <property type="entry name" value="Renin_r"/>
    <property type="match status" value="1"/>
</dbReference>
<dbReference type="Pfam" id="PF25294">
    <property type="entry name" value="RENR_N"/>
    <property type="match status" value="1"/>
</dbReference>
<reference key="1">
    <citation type="submission" date="2007-04" db="EMBL/GenBank/DDBJ databases">
        <authorList>
            <consortium name="NIH - Mammalian Gene Collection (MGC) project"/>
        </authorList>
    </citation>
    <scope>NUCLEOTIDE SEQUENCE [LARGE SCALE MRNA]</scope>
    <source>
        <strain>Hereford</strain>
        <tissue>Fetal pons</tissue>
    </source>
</reference>
<reference key="2">
    <citation type="journal article" date="1998" name="J. Biol. Chem.">
        <title>Identification and characterization of a novel 9.2-kDa membrane sector-associated protein of vacuolar proton-ATPase from chromaffin granules.</title>
        <authorList>
            <person name="Ludwig J."/>
            <person name="Kerscher S."/>
            <person name="Brandt U."/>
            <person name="Pfeiffer K."/>
            <person name="Getlawi F."/>
            <person name="Apps D.K."/>
            <person name="Schaegger H."/>
        </authorList>
    </citation>
    <scope>PROTEIN SEQUENCE OF 283-312</scope>
    <source>
        <tissue>Adrenal medulla</tissue>
    </source>
</reference>
<reference evidence="7 8" key="3">
    <citation type="journal article" date="2020" name="Nat. Commun.">
        <title>Cryo-EM structures of intact V-ATPase from bovine brain.</title>
        <authorList>
            <person name="Wang R."/>
            <person name="Long T."/>
            <person name="Hassan A."/>
            <person name="Wang J."/>
            <person name="Sun Y."/>
            <person name="Xie X.S."/>
            <person name="Li X."/>
        </authorList>
    </citation>
    <scope>STRUCTURE BY ELECTRON MICROSCOPY (3.37 ANGSTROMS) IN COMPLEX WITH THE V-ATPASE</scope>
    <scope>SUBCELLULAR LOCATION</scope>
    <scope>IDENTIFICATION BY MASS SPECTROMETRY</scope>
    <scope>TISSUE SPECIFICITY</scope>
</reference>
<proteinExistence type="evidence at protein level"/>
<sequence length="351" mass="39491">MAVLVVFLSFLVADVFGNEFSILRSPGSVVFRNGNWPIPGERIPDVAALSMGFSVKEDLSWPGLAVGNLFHRPRATVMVMVKGVDKLALPPGSVISYPLENAVPFSLDSVANSIHSLFSEETPVVLQLAPSEERVYMVGKANSVFEDLSVTLRQLRNRLFQENSVLTSLPLNSLSRNNEVDLLFLSELQVLRDISSLLSRHKHLAKDHSPDLYSLELAGLDEIGKHYGEDSEQFRDASKILIDALQKFADDMYNLYGGNAVVELVTVRSFDTSLVRKTRNILETKQVKDPSTTYNLAYKYNFEYPVVFNLVLWIMIGLALTLIVTCYNIWNMDPGYDSIIYRMTNQKIRMD</sequence>
<keyword id="KW-0002">3D-structure</keyword>
<keyword id="KW-1003">Cell membrane</keyword>
<keyword id="KW-0966">Cell projection</keyword>
<keyword id="KW-0165">Cleavage on pair of basic residues</keyword>
<keyword id="KW-0968">Cytoplasmic vesicle</keyword>
<keyword id="KW-0903">Direct protein sequencing</keyword>
<keyword id="KW-0256">Endoplasmic reticulum</keyword>
<keyword id="KW-0967">Endosome</keyword>
<keyword id="KW-0458">Lysosome</keyword>
<keyword id="KW-0472">Membrane</keyword>
<keyword id="KW-0597">Phosphoprotein</keyword>
<keyword id="KW-0628">Postsynaptic cell membrane</keyword>
<keyword id="KW-0675">Receptor</keyword>
<keyword id="KW-1185">Reference proteome</keyword>
<keyword id="KW-0732">Signal</keyword>
<keyword id="KW-0770">Synapse</keyword>
<keyword id="KW-0812">Transmembrane</keyword>
<keyword id="KW-1133">Transmembrane helix</keyword>
<evidence type="ECO:0000250" key="1">
    <source>
        <dbReference type="UniProtKB" id="O75787"/>
    </source>
</evidence>
<evidence type="ECO:0000250" key="2">
    <source>
        <dbReference type="UniProtKB" id="Q6AXS4"/>
    </source>
</evidence>
<evidence type="ECO:0000250" key="3">
    <source>
        <dbReference type="UniProtKB" id="Q9CYN9"/>
    </source>
</evidence>
<evidence type="ECO:0000255" key="4"/>
<evidence type="ECO:0000269" key="5">
    <source>
    </source>
</evidence>
<evidence type="ECO:0000305" key="6"/>
<evidence type="ECO:0007744" key="7">
    <source>
        <dbReference type="PDB" id="6XBW"/>
    </source>
</evidence>
<evidence type="ECO:0007744" key="8">
    <source>
        <dbReference type="PDB" id="6XBY"/>
    </source>
</evidence>
<evidence type="ECO:0007829" key="9">
    <source>
        <dbReference type="PDB" id="6XBW"/>
    </source>
</evidence>
<name>RENR_BOVIN</name>
<comment type="function">
    <text evidence="1 3">Multifunctional protein which functions as a renin, prorenin cellular receptor and is involved in the assembly of the lysosomal proton-transporting V-type ATPase (V-ATPase) and the acidification of the endo-lysosomal system (By similarity). May mediate renin-dependent cellular responses by activating ERK1 and ERK2 (By similarity). By increasing the catalytic efficiency of renin in AGT/angiotensinogen conversion to angiotensin I, may also play a role in the renin-angiotensin system (RAS) (By similarity). Through its function in V-type ATPase (v-ATPase) assembly and acidification of the lysosome it regulates protein degradation and may control different signaling pathways important for proper brain development, synapse morphology and synaptic transmission (By similarity).</text>
</comment>
<comment type="subunit">
    <text evidence="1 5">Interacts with renin (By similarity). Accessory component of the multisubunit proton-transporting vacuolar (V)-ATPase protein pump (PubMed:32764564). Interacts (via N-terminus) with ATP6AP1 (via N-terminus) (By similarity). Interacts with ATP6V0D1; ATP6V0D1 is a V-ATPase complex subunit and the interaction promotes V-ATPase complex assembly (PubMed:32764564). Interacts with TMEM9; TMEM9 is a V-ATPase assembly regulator and the interaction induces the interaction with ATP6V0D1 (By similarity). Interacts with VMA21 (via N-terminus); VMA21 is a V-ATPase accessory component (By similarity).</text>
</comment>
<comment type="subcellular location">
    <subcellularLocation>
        <location evidence="3">Endoplasmic reticulum membrane</location>
        <topology evidence="6">Single-pass type I membrane protein</topology>
    </subcellularLocation>
    <subcellularLocation>
        <location evidence="3">Lysosome membrane</location>
        <topology evidence="6">Single-pass type I membrane protein</topology>
    </subcellularLocation>
    <subcellularLocation>
        <location evidence="3">Cytoplasmic vesicle</location>
        <location evidence="3">Autophagosome membrane</location>
        <topology evidence="6">Single-pass type I membrane protein</topology>
    </subcellularLocation>
    <subcellularLocation>
        <location evidence="3">Cell projection</location>
        <location evidence="3">Dendritic spine membrane</location>
        <topology evidence="6">Single-pass type I membrane protein</topology>
    </subcellularLocation>
    <subcellularLocation>
        <location evidence="3">Cell projection</location>
        <location evidence="3">Axon</location>
    </subcellularLocation>
    <subcellularLocation>
        <location evidence="3">Endosome membrane</location>
    </subcellularLocation>
    <subcellularLocation>
        <location evidence="5">Cytoplasmic vesicle</location>
        <location evidence="5">Clathrin-coated vesicle membrane</location>
        <topology evidence="6">Single-pass type I membrane protein</topology>
    </subcellularLocation>
    <subcellularLocation>
        <location evidence="2">Cytoplasmic vesicle</location>
        <location evidence="2">Secretory vesicle</location>
        <location evidence="2">Synaptic vesicle membrane</location>
        <topology evidence="6">Single-pass type I membrane protein</topology>
    </subcellularLocation>
</comment>
<comment type="tissue specificity">
    <text evidence="5">Expressed in the brain.</text>
</comment>
<comment type="PTM">
    <text evidence="1">Phosphorylated.</text>
</comment>
<comment type="PTM">
    <text evidence="1">Proteolytically cleaved by a furin-like convertase in the trans-Golgi network to generate N- and C-terminal fragments.</text>
</comment>
<accession>P81134</accession>
<accession>A5D7N4</accession>
<gene>
    <name type="primary">ATP6AP2</name>
    <name type="synonym">ATP6IP2</name>
</gene>